<organism>
    <name type="scientific">Sulfolobus islandicus filamentous virus (isolate Iceland/Hveragerdi)</name>
    <name type="common">SIFV</name>
    <dbReference type="NCBI Taxonomy" id="654908"/>
    <lineage>
        <taxon>Viruses</taxon>
        <taxon>Adnaviria</taxon>
        <taxon>Zilligvirae</taxon>
        <taxon>Taleaviricota</taxon>
        <taxon>Tokiviricetes</taxon>
        <taxon>Ligamenvirales</taxon>
        <taxon>Lipothrixviridae</taxon>
        <taxon>Betalipothrixvirus</taxon>
        <taxon>Sulfolobus islandicus filamentous virus</taxon>
    </lineage>
</organism>
<feature type="chain" id="PRO_0000385442" description="Uncharacterized protein 28">
    <location>
        <begin position="1"/>
        <end position="101"/>
    </location>
</feature>
<accession>Q914K2</accession>
<name>Y028_SIFVH</name>
<sequence>MMIVTIEKSLYDRLREEAERRETSVSAVLRQLLLNYFNIEDDTKSYRKENVKNVIIRVGEKEYVRLQVHMKKENELIIKNELKRRGMSVNQLLKNEILLTA</sequence>
<organismHost>
    <name type="scientific">Saccharolobus islandicus</name>
    <name type="common">Sulfolobus islandicus</name>
    <dbReference type="NCBI Taxonomy" id="43080"/>
</organismHost>
<gene>
    <name type="primary">SIFV0028</name>
</gene>
<keyword id="KW-1185">Reference proteome</keyword>
<reference key="1">
    <citation type="journal article" date="2000" name="Virology">
        <title>A novel lipothrixvirus, SIFV, of the extremely thermophilic crenarchaeon Sulfolobus.</title>
        <authorList>
            <person name="Arnold H.P."/>
            <person name="Zillig W."/>
            <person name="Ziese U."/>
            <person name="Holz I."/>
            <person name="Crosby M."/>
            <person name="Utterback T."/>
            <person name="Weidmann J.F."/>
            <person name="Umayam L.A."/>
            <person name="Teffera K."/>
            <person name="Kristjanson J.K."/>
            <person name="Klenk H.P."/>
            <person name="Nelson K.E."/>
            <person name="Fraser C.M."/>
        </authorList>
    </citation>
    <scope>NUCLEOTIDE SEQUENCE [GENOMIC DNA]</scope>
</reference>
<proteinExistence type="predicted"/>
<dbReference type="EMBL" id="AF440571">
    <property type="protein sequence ID" value="AAL27739.1"/>
    <property type="molecule type" value="Genomic_DNA"/>
</dbReference>
<dbReference type="RefSeq" id="NP_445693.1">
    <property type="nucleotide sequence ID" value="NC_003214.2"/>
</dbReference>
<dbReference type="SMR" id="Q914K2"/>
<dbReference type="GeneID" id="922299"/>
<dbReference type="KEGG" id="vg:922299"/>
<dbReference type="Proteomes" id="UP000007017">
    <property type="component" value="Segment"/>
</dbReference>
<dbReference type="GO" id="GO:0006355">
    <property type="term" value="P:regulation of DNA-templated transcription"/>
    <property type="evidence" value="ECO:0007669"/>
    <property type="project" value="InterPro"/>
</dbReference>
<dbReference type="Gene3D" id="1.10.1220.10">
    <property type="entry name" value="Met repressor-like"/>
    <property type="match status" value="1"/>
</dbReference>
<dbReference type="InterPro" id="IPR013321">
    <property type="entry name" value="Arc_rbn_hlx_hlx"/>
</dbReference>
<dbReference type="InterPro" id="IPR002145">
    <property type="entry name" value="CopG"/>
</dbReference>
<dbReference type="Pfam" id="PF01402">
    <property type="entry name" value="RHH_1"/>
    <property type="match status" value="1"/>
</dbReference>
<protein>
    <recommendedName>
        <fullName>Uncharacterized protein 28</fullName>
    </recommendedName>
</protein>